<organism>
    <name type="scientific">Vibrio campbellii (strain ATCC BAA-1116)</name>
    <dbReference type="NCBI Taxonomy" id="2902295"/>
    <lineage>
        <taxon>Bacteria</taxon>
        <taxon>Pseudomonadati</taxon>
        <taxon>Pseudomonadota</taxon>
        <taxon>Gammaproteobacteria</taxon>
        <taxon>Vibrionales</taxon>
        <taxon>Vibrionaceae</taxon>
        <taxon>Vibrio</taxon>
    </lineage>
</organism>
<protein>
    <recommendedName>
        <fullName evidence="1">ATP synthase subunit alpha 1</fullName>
        <ecNumber evidence="1">7.1.2.2</ecNumber>
    </recommendedName>
    <alternativeName>
        <fullName evidence="1">ATP synthase F1 sector subunit alpha 1</fullName>
    </alternativeName>
    <alternativeName>
        <fullName evidence="1">F-ATPase subunit alpha 1</fullName>
    </alternativeName>
</protein>
<keyword id="KW-0066">ATP synthesis</keyword>
<keyword id="KW-0067">ATP-binding</keyword>
<keyword id="KW-0997">Cell inner membrane</keyword>
<keyword id="KW-1003">Cell membrane</keyword>
<keyword id="KW-0139">CF(1)</keyword>
<keyword id="KW-0375">Hydrogen ion transport</keyword>
<keyword id="KW-0406">Ion transport</keyword>
<keyword id="KW-0472">Membrane</keyword>
<keyword id="KW-0547">Nucleotide-binding</keyword>
<keyword id="KW-1278">Translocase</keyword>
<keyword id="KW-0813">Transport</keyword>
<name>ATPA1_VIBC1</name>
<feature type="chain" id="PRO_0000339062" description="ATP synthase subunit alpha 1">
    <location>
        <begin position="1"/>
        <end position="513"/>
    </location>
</feature>
<feature type="binding site" evidence="1">
    <location>
        <begin position="169"/>
        <end position="176"/>
    </location>
    <ligand>
        <name>ATP</name>
        <dbReference type="ChEBI" id="CHEBI:30616"/>
    </ligand>
</feature>
<feature type="site" description="Required for activity" evidence="1">
    <location>
        <position position="373"/>
    </location>
</feature>
<evidence type="ECO:0000255" key="1">
    <source>
        <dbReference type="HAMAP-Rule" id="MF_01346"/>
    </source>
</evidence>
<evidence type="ECO:0000305" key="2"/>
<sequence length="513" mass="55479">MQLNSTEISDLIKQRIESFDVVSEARNEGTIVSVSDGIIRIHGLADVMQGEMIELPGGRYALALNLERDSVGAVVMGPYANLKEGMKVTGTGRILEVPVGPELLGRVVNTLGEPIDGKGPIEAKLTSPVEVIAPGVIARKSVDQPVQTGYKSVDSMIPIGRGQRELVIGDRQTGKTAMAIDAIINQKDSGIFSIYVAIGQKASTIANVVRKLEEHGALANTIVVVASASESAALQYLAPYAGCAMGEYFRDRGEDALIVYDDLSKQAVAYRQISLLLKRPPGREAFPGDVFYLHSRLLERAARVNEEYVERFTNGEVKGKTGSLTALPIIETQAGDVSAFVPTNVISITDGQIFLQTELFNAGVRPAVDPGISVSRVGGSAQTKIIKKLSGGIRTALAQYRELAAFAQFSSDLDEATKKQLDHGQKVTELMKQKQYAPMSVFDQALVIFAAERGYLADVELNKLLDFEAALLSYARGQYAEFAAEIDKTGAYNDEVEAQLKKLTDDFVATQTW</sequence>
<dbReference type="EC" id="7.1.2.2" evidence="1"/>
<dbReference type="EMBL" id="CP000789">
    <property type="protein sequence ID" value="ABU69438.1"/>
    <property type="status" value="ALT_INIT"/>
    <property type="molecule type" value="Genomic_DNA"/>
</dbReference>
<dbReference type="SMR" id="A7N0Y3"/>
<dbReference type="KEGG" id="vha:VIBHAR_00423"/>
<dbReference type="PATRIC" id="fig|338187.25.peg.2167"/>
<dbReference type="Proteomes" id="UP000008152">
    <property type="component" value="Chromosome I"/>
</dbReference>
<dbReference type="GO" id="GO:0005886">
    <property type="term" value="C:plasma membrane"/>
    <property type="evidence" value="ECO:0007669"/>
    <property type="project" value="UniProtKB-SubCell"/>
</dbReference>
<dbReference type="GO" id="GO:0045259">
    <property type="term" value="C:proton-transporting ATP synthase complex"/>
    <property type="evidence" value="ECO:0007669"/>
    <property type="project" value="UniProtKB-KW"/>
</dbReference>
<dbReference type="GO" id="GO:0043531">
    <property type="term" value="F:ADP binding"/>
    <property type="evidence" value="ECO:0007669"/>
    <property type="project" value="TreeGrafter"/>
</dbReference>
<dbReference type="GO" id="GO:0005524">
    <property type="term" value="F:ATP binding"/>
    <property type="evidence" value="ECO:0007669"/>
    <property type="project" value="UniProtKB-UniRule"/>
</dbReference>
<dbReference type="GO" id="GO:0046933">
    <property type="term" value="F:proton-transporting ATP synthase activity, rotational mechanism"/>
    <property type="evidence" value="ECO:0007669"/>
    <property type="project" value="UniProtKB-UniRule"/>
</dbReference>
<dbReference type="CDD" id="cd18113">
    <property type="entry name" value="ATP-synt_F1_alpha_C"/>
    <property type="match status" value="1"/>
</dbReference>
<dbReference type="CDD" id="cd18116">
    <property type="entry name" value="ATP-synt_F1_alpha_N"/>
    <property type="match status" value="1"/>
</dbReference>
<dbReference type="CDD" id="cd01132">
    <property type="entry name" value="F1-ATPase_alpha_CD"/>
    <property type="match status" value="1"/>
</dbReference>
<dbReference type="FunFam" id="1.20.150.20:FF:000001">
    <property type="entry name" value="ATP synthase subunit alpha"/>
    <property type="match status" value="1"/>
</dbReference>
<dbReference type="FunFam" id="2.40.30.20:FF:000001">
    <property type="entry name" value="ATP synthase subunit alpha"/>
    <property type="match status" value="1"/>
</dbReference>
<dbReference type="FunFam" id="3.40.50.300:FF:000002">
    <property type="entry name" value="ATP synthase subunit alpha"/>
    <property type="match status" value="1"/>
</dbReference>
<dbReference type="Gene3D" id="2.40.30.20">
    <property type="match status" value="1"/>
</dbReference>
<dbReference type="Gene3D" id="1.20.150.20">
    <property type="entry name" value="ATP synthase alpha/beta chain, C-terminal domain"/>
    <property type="match status" value="1"/>
</dbReference>
<dbReference type="Gene3D" id="3.40.50.300">
    <property type="entry name" value="P-loop containing nucleotide triphosphate hydrolases"/>
    <property type="match status" value="1"/>
</dbReference>
<dbReference type="HAMAP" id="MF_01346">
    <property type="entry name" value="ATP_synth_alpha_bact"/>
    <property type="match status" value="1"/>
</dbReference>
<dbReference type="InterPro" id="IPR023366">
    <property type="entry name" value="ATP_synth_asu-like_sf"/>
</dbReference>
<dbReference type="InterPro" id="IPR000793">
    <property type="entry name" value="ATP_synth_asu_C"/>
</dbReference>
<dbReference type="InterPro" id="IPR038376">
    <property type="entry name" value="ATP_synth_asu_C_sf"/>
</dbReference>
<dbReference type="InterPro" id="IPR033732">
    <property type="entry name" value="ATP_synth_F1_a_nt-bd_dom"/>
</dbReference>
<dbReference type="InterPro" id="IPR005294">
    <property type="entry name" value="ATP_synth_F1_asu"/>
</dbReference>
<dbReference type="InterPro" id="IPR020003">
    <property type="entry name" value="ATPase_a/bsu_AS"/>
</dbReference>
<dbReference type="InterPro" id="IPR004100">
    <property type="entry name" value="ATPase_F1/V1/A1_a/bsu_N"/>
</dbReference>
<dbReference type="InterPro" id="IPR036121">
    <property type="entry name" value="ATPase_F1/V1/A1_a/bsu_N_sf"/>
</dbReference>
<dbReference type="InterPro" id="IPR000194">
    <property type="entry name" value="ATPase_F1/V1/A1_a/bsu_nucl-bd"/>
</dbReference>
<dbReference type="InterPro" id="IPR027417">
    <property type="entry name" value="P-loop_NTPase"/>
</dbReference>
<dbReference type="NCBIfam" id="TIGR00962">
    <property type="entry name" value="atpA"/>
    <property type="match status" value="1"/>
</dbReference>
<dbReference type="NCBIfam" id="NF009884">
    <property type="entry name" value="PRK13343.1"/>
    <property type="match status" value="1"/>
</dbReference>
<dbReference type="PANTHER" id="PTHR48082">
    <property type="entry name" value="ATP SYNTHASE SUBUNIT ALPHA, MITOCHONDRIAL"/>
    <property type="match status" value="1"/>
</dbReference>
<dbReference type="PANTHER" id="PTHR48082:SF2">
    <property type="entry name" value="ATP SYNTHASE SUBUNIT ALPHA, MITOCHONDRIAL"/>
    <property type="match status" value="1"/>
</dbReference>
<dbReference type="Pfam" id="PF00006">
    <property type="entry name" value="ATP-synt_ab"/>
    <property type="match status" value="1"/>
</dbReference>
<dbReference type="Pfam" id="PF00306">
    <property type="entry name" value="ATP-synt_ab_C"/>
    <property type="match status" value="1"/>
</dbReference>
<dbReference type="Pfam" id="PF02874">
    <property type="entry name" value="ATP-synt_ab_N"/>
    <property type="match status" value="1"/>
</dbReference>
<dbReference type="SUPFAM" id="SSF47917">
    <property type="entry name" value="C-terminal domain of alpha and beta subunits of F1 ATP synthase"/>
    <property type="match status" value="1"/>
</dbReference>
<dbReference type="SUPFAM" id="SSF50615">
    <property type="entry name" value="N-terminal domain of alpha and beta subunits of F1 ATP synthase"/>
    <property type="match status" value="1"/>
</dbReference>
<dbReference type="SUPFAM" id="SSF52540">
    <property type="entry name" value="P-loop containing nucleoside triphosphate hydrolases"/>
    <property type="match status" value="1"/>
</dbReference>
<dbReference type="PROSITE" id="PS00152">
    <property type="entry name" value="ATPASE_ALPHA_BETA"/>
    <property type="match status" value="1"/>
</dbReference>
<proteinExistence type="inferred from homology"/>
<accession>A7N0Y3</accession>
<comment type="function">
    <text evidence="1">Produces ATP from ADP in the presence of a proton gradient across the membrane. The alpha chain is a regulatory subunit.</text>
</comment>
<comment type="catalytic activity">
    <reaction evidence="1">
        <text>ATP + H2O + 4 H(+)(in) = ADP + phosphate + 5 H(+)(out)</text>
        <dbReference type="Rhea" id="RHEA:57720"/>
        <dbReference type="ChEBI" id="CHEBI:15377"/>
        <dbReference type="ChEBI" id="CHEBI:15378"/>
        <dbReference type="ChEBI" id="CHEBI:30616"/>
        <dbReference type="ChEBI" id="CHEBI:43474"/>
        <dbReference type="ChEBI" id="CHEBI:456216"/>
        <dbReference type="EC" id="7.1.2.2"/>
    </reaction>
</comment>
<comment type="subunit">
    <text evidence="1">F-type ATPases have 2 components, CF(1) - the catalytic core - and CF(0) - the membrane proton channel. CF(1) has five subunits: alpha(3), beta(3), gamma(1), delta(1), epsilon(1). CF(0) has three main subunits: a(1), b(2) and c(9-12). The alpha and beta chains form an alternating ring which encloses part of the gamma chain. CF(1) is attached to CF(0) by a central stalk formed by the gamma and epsilon chains, while a peripheral stalk is formed by the delta and b chains.</text>
</comment>
<comment type="subcellular location">
    <subcellularLocation>
        <location evidence="1">Cell inner membrane</location>
        <topology evidence="1">Peripheral membrane protein</topology>
    </subcellularLocation>
</comment>
<comment type="similarity">
    <text evidence="1">Belongs to the ATPase alpha/beta chains family.</text>
</comment>
<comment type="sequence caution" evidence="2">
    <conflict type="erroneous initiation">
        <sequence resource="EMBL-CDS" id="ABU69438"/>
    </conflict>
</comment>
<reference key="1">
    <citation type="submission" date="2007-08" db="EMBL/GenBank/DDBJ databases">
        <authorList>
            <consortium name="The Vibrio harveyi Genome Sequencing Project"/>
            <person name="Bassler B."/>
            <person name="Clifton S.W."/>
            <person name="Fulton L."/>
            <person name="Delehaunty K."/>
            <person name="Fronick C."/>
            <person name="Harrison M."/>
            <person name="Markivic C."/>
            <person name="Fulton R."/>
            <person name="Tin-Wollam A.-M."/>
            <person name="Shah N."/>
            <person name="Pepin K."/>
            <person name="Nash W."/>
            <person name="Thiruvilangam P."/>
            <person name="Bhonagiri V."/>
            <person name="Waters C."/>
            <person name="Tu K.C."/>
            <person name="Irgon J."/>
            <person name="Wilson R.K."/>
        </authorList>
    </citation>
    <scope>NUCLEOTIDE SEQUENCE [LARGE SCALE GENOMIC DNA]</scope>
    <source>
        <strain>ATCC BAA-1116 / BB120</strain>
    </source>
</reference>
<gene>
    <name evidence="1" type="primary">atpA1</name>
    <name type="ordered locus">VIBHAR_00423</name>
</gene>